<evidence type="ECO:0000255" key="1">
    <source>
        <dbReference type="HAMAP-Rule" id="MF_01537"/>
    </source>
</evidence>
<name>PPNP_ALCBS</name>
<feature type="chain" id="PRO_0000298688" description="Pyrimidine/purine nucleoside phosphorylase">
    <location>
        <begin position="1"/>
        <end position="94"/>
    </location>
</feature>
<reference key="1">
    <citation type="journal article" date="2006" name="Nat. Biotechnol.">
        <title>Genome sequence of the ubiquitous hydrocarbon-degrading marine bacterium Alcanivorax borkumensis.</title>
        <authorList>
            <person name="Schneiker S."/>
            <person name="Martins dos Santos V.A.P."/>
            <person name="Bartels D."/>
            <person name="Bekel T."/>
            <person name="Brecht M."/>
            <person name="Buhrmester J."/>
            <person name="Chernikova T.N."/>
            <person name="Denaro R."/>
            <person name="Ferrer M."/>
            <person name="Gertler C."/>
            <person name="Goesmann A."/>
            <person name="Golyshina O.V."/>
            <person name="Kaminski F."/>
            <person name="Khachane A.N."/>
            <person name="Lang S."/>
            <person name="Linke B."/>
            <person name="McHardy A.C."/>
            <person name="Meyer F."/>
            <person name="Nechitaylo T."/>
            <person name="Puehler A."/>
            <person name="Regenhardt D."/>
            <person name="Rupp O."/>
            <person name="Sabirova J.S."/>
            <person name="Selbitschka W."/>
            <person name="Yakimov M.M."/>
            <person name="Timmis K.N."/>
            <person name="Vorhoelter F.-J."/>
            <person name="Weidner S."/>
            <person name="Kaiser O."/>
            <person name="Golyshin P.N."/>
        </authorList>
    </citation>
    <scope>NUCLEOTIDE SEQUENCE [LARGE SCALE GENOMIC DNA]</scope>
    <source>
        <strain>ATCC 700651 / DSM 11573 / NCIMB 13689 / SK2</strain>
    </source>
</reference>
<accession>Q0VL74</accession>
<proteinExistence type="inferred from homology"/>
<dbReference type="EC" id="2.4.2.1" evidence="1"/>
<dbReference type="EC" id="2.4.2.2" evidence="1"/>
<dbReference type="EMBL" id="AM286690">
    <property type="protein sequence ID" value="CAL18074.1"/>
    <property type="molecule type" value="Genomic_DNA"/>
</dbReference>
<dbReference type="RefSeq" id="WP_011589897.1">
    <property type="nucleotide sequence ID" value="NC_008260.1"/>
</dbReference>
<dbReference type="SMR" id="Q0VL74"/>
<dbReference type="STRING" id="393595.ABO_2626"/>
<dbReference type="KEGG" id="abo:ABO_2626"/>
<dbReference type="eggNOG" id="COG3123">
    <property type="taxonomic scope" value="Bacteria"/>
</dbReference>
<dbReference type="HOGENOM" id="CLU_157874_0_0_6"/>
<dbReference type="OrthoDB" id="9793848at2"/>
<dbReference type="Proteomes" id="UP000008871">
    <property type="component" value="Chromosome"/>
</dbReference>
<dbReference type="GO" id="GO:0005829">
    <property type="term" value="C:cytosol"/>
    <property type="evidence" value="ECO:0007669"/>
    <property type="project" value="TreeGrafter"/>
</dbReference>
<dbReference type="GO" id="GO:0047975">
    <property type="term" value="F:guanosine phosphorylase activity"/>
    <property type="evidence" value="ECO:0007669"/>
    <property type="project" value="UniProtKB-EC"/>
</dbReference>
<dbReference type="GO" id="GO:0004731">
    <property type="term" value="F:purine-nucleoside phosphorylase activity"/>
    <property type="evidence" value="ECO:0007669"/>
    <property type="project" value="UniProtKB-UniRule"/>
</dbReference>
<dbReference type="GO" id="GO:0009032">
    <property type="term" value="F:thymidine phosphorylase activity"/>
    <property type="evidence" value="ECO:0007669"/>
    <property type="project" value="UniProtKB-EC"/>
</dbReference>
<dbReference type="GO" id="GO:0004850">
    <property type="term" value="F:uridine phosphorylase activity"/>
    <property type="evidence" value="ECO:0007669"/>
    <property type="project" value="UniProtKB-EC"/>
</dbReference>
<dbReference type="CDD" id="cd20296">
    <property type="entry name" value="cupin_PpnP-like"/>
    <property type="match status" value="1"/>
</dbReference>
<dbReference type="FunFam" id="2.60.120.10:FF:000016">
    <property type="entry name" value="Pyrimidine/purine nucleoside phosphorylase"/>
    <property type="match status" value="1"/>
</dbReference>
<dbReference type="Gene3D" id="2.60.120.10">
    <property type="entry name" value="Jelly Rolls"/>
    <property type="match status" value="1"/>
</dbReference>
<dbReference type="HAMAP" id="MF_01537">
    <property type="entry name" value="Nucleos_phosphorylase_PpnP"/>
    <property type="match status" value="1"/>
</dbReference>
<dbReference type="InterPro" id="IPR009664">
    <property type="entry name" value="Ppnp"/>
</dbReference>
<dbReference type="InterPro" id="IPR014710">
    <property type="entry name" value="RmlC-like_jellyroll"/>
</dbReference>
<dbReference type="InterPro" id="IPR011051">
    <property type="entry name" value="RmlC_Cupin_sf"/>
</dbReference>
<dbReference type="PANTHER" id="PTHR36540">
    <property type="entry name" value="PYRIMIDINE/PURINE NUCLEOSIDE PHOSPHORYLASE"/>
    <property type="match status" value="1"/>
</dbReference>
<dbReference type="PANTHER" id="PTHR36540:SF1">
    <property type="entry name" value="PYRIMIDINE_PURINE NUCLEOSIDE PHOSPHORYLASE"/>
    <property type="match status" value="1"/>
</dbReference>
<dbReference type="Pfam" id="PF06865">
    <property type="entry name" value="Ppnp"/>
    <property type="match status" value="1"/>
</dbReference>
<dbReference type="SUPFAM" id="SSF51182">
    <property type="entry name" value="RmlC-like cupins"/>
    <property type="match status" value="1"/>
</dbReference>
<sequence length="94" mass="10286">MFKVNEYFDAKVASIAFQTETKPATIGVMAPGDYEFGTSEHETMTVTSGALTVKLPGSADWQTFVAGETFEIEADQKFQVKVAIDTAYLCLYGE</sequence>
<protein>
    <recommendedName>
        <fullName evidence="1">Pyrimidine/purine nucleoside phosphorylase</fullName>
        <ecNumber evidence="1">2.4.2.1</ecNumber>
        <ecNumber evidence="1">2.4.2.2</ecNumber>
    </recommendedName>
    <alternativeName>
        <fullName evidence="1">Adenosine phosphorylase</fullName>
    </alternativeName>
    <alternativeName>
        <fullName evidence="1">Cytidine phosphorylase</fullName>
    </alternativeName>
    <alternativeName>
        <fullName evidence="1">Guanosine phosphorylase</fullName>
    </alternativeName>
    <alternativeName>
        <fullName evidence="1">Inosine phosphorylase</fullName>
    </alternativeName>
    <alternativeName>
        <fullName evidence="1">Thymidine phosphorylase</fullName>
    </alternativeName>
    <alternativeName>
        <fullName evidence="1">Uridine phosphorylase</fullName>
    </alternativeName>
    <alternativeName>
        <fullName evidence="1">Xanthosine phosphorylase</fullName>
    </alternativeName>
</protein>
<organism>
    <name type="scientific">Alcanivorax borkumensis (strain ATCC 700651 / DSM 11573 / NCIMB 13689 / SK2)</name>
    <dbReference type="NCBI Taxonomy" id="393595"/>
    <lineage>
        <taxon>Bacteria</taxon>
        <taxon>Pseudomonadati</taxon>
        <taxon>Pseudomonadota</taxon>
        <taxon>Gammaproteobacteria</taxon>
        <taxon>Oceanospirillales</taxon>
        <taxon>Alcanivoracaceae</taxon>
        <taxon>Alcanivorax</taxon>
    </lineage>
</organism>
<keyword id="KW-0328">Glycosyltransferase</keyword>
<keyword id="KW-1185">Reference proteome</keyword>
<keyword id="KW-0808">Transferase</keyword>
<gene>
    <name evidence="1" type="primary">ppnP</name>
    <name type="ordered locus">ABO_2626</name>
</gene>
<comment type="function">
    <text evidence="1">Catalyzes the phosphorolysis of diverse nucleosides, yielding D-ribose 1-phosphate and the respective free bases. Can use uridine, adenosine, guanosine, cytidine, thymidine, inosine and xanthosine as substrates. Also catalyzes the reverse reactions.</text>
</comment>
<comment type="catalytic activity">
    <reaction evidence="1">
        <text>a purine D-ribonucleoside + phosphate = a purine nucleobase + alpha-D-ribose 1-phosphate</text>
        <dbReference type="Rhea" id="RHEA:19805"/>
        <dbReference type="ChEBI" id="CHEBI:26386"/>
        <dbReference type="ChEBI" id="CHEBI:43474"/>
        <dbReference type="ChEBI" id="CHEBI:57720"/>
        <dbReference type="ChEBI" id="CHEBI:142355"/>
        <dbReference type="EC" id="2.4.2.1"/>
    </reaction>
</comment>
<comment type="catalytic activity">
    <reaction evidence="1">
        <text>adenosine + phosphate = alpha-D-ribose 1-phosphate + adenine</text>
        <dbReference type="Rhea" id="RHEA:27642"/>
        <dbReference type="ChEBI" id="CHEBI:16335"/>
        <dbReference type="ChEBI" id="CHEBI:16708"/>
        <dbReference type="ChEBI" id="CHEBI:43474"/>
        <dbReference type="ChEBI" id="CHEBI:57720"/>
        <dbReference type="EC" id="2.4.2.1"/>
    </reaction>
</comment>
<comment type="catalytic activity">
    <reaction evidence="1">
        <text>cytidine + phosphate = cytosine + alpha-D-ribose 1-phosphate</text>
        <dbReference type="Rhea" id="RHEA:52540"/>
        <dbReference type="ChEBI" id="CHEBI:16040"/>
        <dbReference type="ChEBI" id="CHEBI:17562"/>
        <dbReference type="ChEBI" id="CHEBI:43474"/>
        <dbReference type="ChEBI" id="CHEBI:57720"/>
        <dbReference type="EC" id="2.4.2.2"/>
    </reaction>
</comment>
<comment type="catalytic activity">
    <reaction evidence="1">
        <text>guanosine + phosphate = alpha-D-ribose 1-phosphate + guanine</text>
        <dbReference type="Rhea" id="RHEA:13233"/>
        <dbReference type="ChEBI" id="CHEBI:16235"/>
        <dbReference type="ChEBI" id="CHEBI:16750"/>
        <dbReference type="ChEBI" id="CHEBI:43474"/>
        <dbReference type="ChEBI" id="CHEBI:57720"/>
        <dbReference type="EC" id="2.4.2.1"/>
    </reaction>
</comment>
<comment type="catalytic activity">
    <reaction evidence="1">
        <text>inosine + phosphate = alpha-D-ribose 1-phosphate + hypoxanthine</text>
        <dbReference type="Rhea" id="RHEA:27646"/>
        <dbReference type="ChEBI" id="CHEBI:17368"/>
        <dbReference type="ChEBI" id="CHEBI:17596"/>
        <dbReference type="ChEBI" id="CHEBI:43474"/>
        <dbReference type="ChEBI" id="CHEBI:57720"/>
        <dbReference type="EC" id="2.4.2.1"/>
    </reaction>
</comment>
<comment type="catalytic activity">
    <reaction evidence="1">
        <text>thymidine + phosphate = 2-deoxy-alpha-D-ribose 1-phosphate + thymine</text>
        <dbReference type="Rhea" id="RHEA:16037"/>
        <dbReference type="ChEBI" id="CHEBI:17748"/>
        <dbReference type="ChEBI" id="CHEBI:17821"/>
        <dbReference type="ChEBI" id="CHEBI:43474"/>
        <dbReference type="ChEBI" id="CHEBI:57259"/>
        <dbReference type="EC" id="2.4.2.2"/>
    </reaction>
</comment>
<comment type="catalytic activity">
    <reaction evidence="1">
        <text>uridine + phosphate = alpha-D-ribose 1-phosphate + uracil</text>
        <dbReference type="Rhea" id="RHEA:24388"/>
        <dbReference type="ChEBI" id="CHEBI:16704"/>
        <dbReference type="ChEBI" id="CHEBI:17568"/>
        <dbReference type="ChEBI" id="CHEBI:43474"/>
        <dbReference type="ChEBI" id="CHEBI:57720"/>
        <dbReference type="EC" id="2.4.2.2"/>
    </reaction>
</comment>
<comment type="catalytic activity">
    <reaction evidence="1">
        <text>xanthosine + phosphate = alpha-D-ribose 1-phosphate + xanthine</text>
        <dbReference type="Rhea" id="RHEA:27638"/>
        <dbReference type="ChEBI" id="CHEBI:17712"/>
        <dbReference type="ChEBI" id="CHEBI:18107"/>
        <dbReference type="ChEBI" id="CHEBI:43474"/>
        <dbReference type="ChEBI" id="CHEBI:57720"/>
        <dbReference type="EC" id="2.4.2.1"/>
    </reaction>
</comment>
<comment type="similarity">
    <text evidence="1">Belongs to the nucleoside phosphorylase PpnP family.</text>
</comment>